<evidence type="ECO:0000255" key="1"/>
<evidence type="ECO:0000256" key="2">
    <source>
        <dbReference type="SAM" id="MobiDB-lite"/>
    </source>
</evidence>
<evidence type="ECO:0000305" key="3"/>
<reference key="1">
    <citation type="journal article" date="1996" name="EMBO J.">
        <title>Complete nucleotide sequence of Saccharomyces cerevisiae chromosome X.</title>
        <authorList>
            <person name="Galibert F."/>
            <person name="Alexandraki D."/>
            <person name="Baur A."/>
            <person name="Boles E."/>
            <person name="Chalwatzis N."/>
            <person name="Chuat J.-C."/>
            <person name="Coster F."/>
            <person name="Cziepluch C."/>
            <person name="de Haan M."/>
            <person name="Domdey H."/>
            <person name="Durand P."/>
            <person name="Entian K.-D."/>
            <person name="Gatius M."/>
            <person name="Goffeau A."/>
            <person name="Grivell L.A."/>
            <person name="Hennemann A."/>
            <person name="Herbert C.J."/>
            <person name="Heumann K."/>
            <person name="Hilger F."/>
            <person name="Hollenberg C.P."/>
            <person name="Huang M.-E."/>
            <person name="Jacq C."/>
            <person name="Jauniaux J.-C."/>
            <person name="Katsoulou C."/>
            <person name="Kirchrath L."/>
            <person name="Kleine K."/>
            <person name="Kordes E."/>
            <person name="Koetter P."/>
            <person name="Liebl S."/>
            <person name="Louis E.J."/>
            <person name="Manus V."/>
            <person name="Mewes H.-W."/>
            <person name="Miosga T."/>
            <person name="Obermaier B."/>
            <person name="Perea J."/>
            <person name="Pohl T.M."/>
            <person name="Portetelle D."/>
            <person name="Pujol A."/>
            <person name="Purnelle B."/>
            <person name="Ramezani Rad M."/>
            <person name="Rasmussen S.W."/>
            <person name="Rose M."/>
            <person name="Rossau R."/>
            <person name="Schaaff-Gerstenschlaeger I."/>
            <person name="Smits P.H.M."/>
            <person name="Scarcez T."/>
            <person name="Soriano N."/>
            <person name="To Van D."/>
            <person name="Tzermia M."/>
            <person name="Van Broekhoven A."/>
            <person name="Vandenbol M."/>
            <person name="Wedler H."/>
            <person name="von Wettstein D."/>
            <person name="Wambutt R."/>
            <person name="Zagulski M."/>
            <person name="Zollner A."/>
            <person name="Karpfinger-Hartl L."/>
        </authorList>
    </citation>
    <scope>NUCLEOTIDE SEQUENCE [LARGE SCALE GENOMIC DNA]</scope>
    <source>
        <strain>ATCC 204508 / S288c</strain>
    </source>
</reference>
<reference key="2">
    <citation type="journal article" date="2014" name="G3 (Bethesda)">
        <title>The reference genome sequence of Saccharomyces cerevisiae: Then and now.</title>
        <authorList>
            <person name="Engel S.R."/>
            <person name="Dietrich F.S."/>
            <person name="Fisk D.G."/>
            <person name="Binkley G."/>
            <person name="Balakrishnan R."/>
            <person name="Costanzo M.C."/>
            <person name="Dwight S.S."/>
            <person name="Hitz B.C."/>
            <person name="Karra K."/>
            <person name="Nash R.S."/>
            <person name="Weng S."/>
            <person name="Wong E.D."/>
            <person name="Lloyd P."/>
            <person name="Skrzypek M.S."/>
            <person name="Miyasato S.R."/>
            <person name="Simison M."/>
            <person name="Cherry J.M."/>
        </authorList>
    </citation>
    <scope>GENOME REANNOTATION</scope>
    <source>
        <strain>ATCC 204508 / S288c</strain>
    </source>
</reference>
<name>HXT16_YEAST</name>
<keyword id="KW-0472">Membrane</keyword>
<keyword id="KW-1185">Reference proteome</keyword>
<keyword id="KW-0677">Repeat</keyword>
<keyword id="KW-0762">Sugar transport</keyword>
<keyword id="KW-0812">Transmembrane</keyword>
<keyword id="KW-1133">Transmembrane helix</keyword>
<keyword id="KW-0813">Transport</keyword>
<sequence>MASEQSSPEINADNLNSSAADVHVQPPGEKEWSDGFYDKEVINGNTPDAPKRGFLGYLIIYLLCYPVSFGGFLPGWDSGITAGFINMDNFKMNFGSYKHSTGEYYLSNVRMGLLVAMFSVGCSIGGVAFARLADTLGRRLAIVIVVLVYMVGAIIQISSNHKWYQYFVGKIIYGLGAGGCSVLCPMLLSEIAPTDLRGGLVSLYQLNMTFGIFLGYCSVYGTRKYSNTAQWRIPVGLCFLWALIIIVGMLLVPESPRYLIECERHEEACVSIAKIDKVSPEDPWVLKQADEINAGVLAQRELGEASWKELFSVKTKVLQRLITGILVQTFLQLTGENYFFFYGTTIFKSVGLTDGFETSIVLGTVNFFSTIIAVMVVDKIGRRKCLLFGAASMMACMVIFASIGVKCLYPHGQDGPSSKGAGNAMIVFTCFYIFCFATTWAPVAYIVVAESFPSKVKSKAMSISTAFNWLWQFLIGFFTPFITGSIHFYYGYVFVGCLVAMFLYVFFFLPETIGLSLEETQLLYEEGIKPWKSASWVPPSRRGASSRETEAKKKSWKEVLKFPKSFN</sequence>
<dbReference type="EMBL" id="Z49658">
    <property type="protein sequence ID" value="CAA89691.1"/>
    <property type="molecule type" value="Genomic_DNA"/>
</dbReference>
<dbReference type="EMBL" id="BK006943">
    <property type="protein sequence ID" value="DAA08942.1"/>
    <property type="molecule type" value="Genomic_DNA"/>
</dbReference>
<dbReference type="PIR" id="S57187">
    <property type="entry name" value="S57187"/>
</dbReference>
<dbReference type="RefSeq" id="NP_012692.3">
    <property type="nucleotide sequence ID" value="NM_001181816.3"/>
</dbReference>
<dbReference type="SMR" id="P47185"/>
<dbReference type="BioGRID" id="33912">
    <property type="interactions" value="23"/>
</dbReference>
<dbReference type="DIP" id="DIP-7209N"/>
<dbReference type="FunCoup" id="P47185">
    <property type="interactions" value="1485"/>
</dbReference>
<dbReference type="IntAct" id="P47185">
    <property type="interactions" value="3"/>
</dbReference>
<dbReference type="MINT" id="P47185"/>
<dbReference type="STRING" id="4932.YJR158W"/>
<dbReference type="PaxDb" id="4932-YJR158W"/>
<dbReference type="PeptideAtlas" id="P47185"/>
<dbReference type="EnsemblFungi" id="YJR158W_mRNA">
    <property type="protein sequence ID" value="YJR158W"/>
    <property type="gene ID" value="YJR158W"/>
</dbReference>
<dbReference type="GeneID" id="853623"/>
<dbReference type="KEGG" id="sce:YJR158W"/>
<dbReference type="AGR" id="SGD:S000003919"/>
<dbReference type="SGD" id="S000003919">
    <property type="gene designation" value="HXT16"/>
</dbReference>
<dbReference type="VEuPathDB" id="FungiDB:YJR158W"/>
<dbReference type="eggNOG" id="KOG0254">
    <property type="taxonomic scope" value="Eukaryota"/>
</dbReference>
<dbReference type="GeneTree" id="ENSGT00940000176280"/>
<dbReference type="HOGENOM" id="CLU_001265_30_1_1"/>
<dbReference type="InParanoid" id="P47185"/>
<dbReference type="OrthoDB" id="4040821at2759"/>
<dbReference type="BioCyc" id="YEAST:G3O-31768-MONOMER"/>
<dbReference type="BioGRID-ORCS" id="853623">
    <property type="hits" value="0 hits in 10 CRISPR screens"/>
</dbReference>
<dbReference type="PRO" id="PR:P47185"/>
<dbReference type="Proteomes" id="UP000002311">
    <property type="component" value="Chromosome X"/>
</dbReference>
<dbReference type="RNAct" id="P47185">
    <property type="molecule type" value="protein"/>
</dbReference>
<dbReference type="GO" id="GO:0071944">
    <property type="term" value="C:cell periphery"/>
    <property type="evidence" value="ECO:0007005"/>
    <property type="project" value="SGD"/>
</dbReference>
<dbReference type="GO" id="GO:0005886">
    <property type="term" value="C:plasma membrane"/>
    <property type="evidence" value="ECO:0000318"/>
    <property type="project" value="GO_Central"/>
</dbReference>
<dbReference type="GO" id="GO:0005351">
    <property type="term" value="F:carbohydrate:proton symporter activity"/>
    <property type="evidence" value="ECO:0000318"/>
    <property type="project" value="GO_Central"/>
</dbReference>
<dbReference type="GO" id="GO:0055056">
    <property type="term" value="F:D-glucose transmembrane transporter activity"/>
    <property type="evidence" value="ECO:0000315"/>
    <property type="project" value="SGD"/>
</dbReference>
<dbReference type="GO" id="GO:0005353">
    <property type="term" value="F:fructose transmembrane transporter activity"/>
    <property type="evidence" value="ECO:0000315"/>
    <property type="project" value="SGD"/>
</dbReference>
<dbReference type="GO" id="GO:0015578">
    <property type="term" value="F:mannose transmembrane transporter activity"/>
    <property type="evidence" value="ECO:0000315"/>
    <property type="project" value="SGD"/>
</dbReference>
<dbReference type="GO" id="GO:0008643">
    <property type="term" value="P:carbohydrate transport"/>
    <property type="evidence" value="ECO:0000318"/>
    <property type="project" value="GO_Central"/>
</dbReference>
<dbReference type="GO" id="GO:0008645">
    <property type="term" value="P:hexose transmembrane transport"/>
    <property type="evidence" value="ECO:0000315"/>
    <property type="project" value="SGD"/>
</dbReference>
<dbReference type="GO" id="GO:0015797">
    <property type="term" value="P:mannitol transmembrane transport"/>
    <property type="evidence" value="ECO:0000316"/>
    <property type="project" value="SGD"/>
</dbReference>
<dbReference type="GO" id="GO:0015795">
    <property type="term" value="P:sorbitol transmembrane transport"/>
    <property type="evidence" value="ECO:0000316"/>
    <property type="project" value="SGD"/>
</dbReference>
<dbReference type="CDD" id="cd17356">
    <property type="entry name" value="MFS_HXT"/>
    <property type="match status" value="1"/>
</dbReference>
<dbReference type="FunFam" id="1.20.1250.20:FF:000044">
    <property type="entry name" value="Hexose transporter Hxt3p"/>
    <property type="match status" value="1"/>
</dbReference>
<dbReference type="Gene3D" id="1.20.1250.20">
    <property type="entry name" value="MFS general substrate transporter like domains"/>
    <property type="match status" value="1"/>
</dbReference>
<dbReference type="InterPro" id="IPR020846">
    <property type="entry name" value="MFS_dom"/>
</dbReference>
<dbReference type="InterPro" id="IPR005828">
    <property type="entry name" value="MFS_sugar_transport-like"/>
</dbReference>
<dbReference type="InterPro" id="IPR050360">
    <property type="entry name" value="MFS_Sugar_Transporters"/>
</dbReference>
<dbReference type="InterPro" id="IPR036259">
    <property type="entry name" value="MFS_trans_sf"/>
</dbReference>
<dbReference type="InterPro" id="IPR003663">
    <property type="entry name" value="Sugar/inositol_transpt"/>
</dbReference>
<dbReference type="InterPro" id="IPR005829">
    <property type="entry name" value="Sugar_transporter_CS"/>
</dbReference>
<dbReference type="NCBIfam" id="TIGR00879">
    <property type="entry name" value="SP"/>
    <property type="match status" value="1"/>
</dbReference>
<dbReference type="PANTHER" id="PTHR48022:SF75">
    <property type="entry name" value="GALACTOSE TRANSPORTER-RELATED"/>
    <property type="match status" value="1"/>
</dbReference>
<dbReference type="PANTHER" id="PTHR48022">
    <property type="entry name" value="PLASTIDIC GLUCOSE TRANSPORTER 4"/>
    <property type="match status" value="1"/>
</dbReference>
<dbReference type="Pfam" id="PF00083">
    <property type="entry name" value="Sugar_tr"/>
    <property type="match status" value="1"/>
</dbReference>
<dbReference type="PRINTS" id="PR00171">
    <property type="entry name" value="SUGRTRNSPORT"/>
</dbReference>
<dbReference type="SUPFAM" id="SSF103473">
    <property type="entry name" value="MFS general substrate transporter"/>
    <property type="match status" value="1"/>
</dbReference>
<dbReference type="PROSITE" id="PS50850">
    <property type="entry name" value="MFS"/>
    <property type="match status" value="1"/>
</dbReference>
<dbReference type="PROSITE" id="PS00216">
    <property type="entry name" value="SUGAR_TRANSPORT_1"/>
    <property type="match status" value="1"/>
</dbReference>
<dbReference type="PROSITE" id="PS00217">
    <property type="entry name" value="SUGAR_TRANSPORT_2"/>
    <property type="match status" value="1"/>
</dbReference>
<gene>
    <name type="primary">HXT16</name>
    <name type="ordered locus">YJR158W</name>
    <name type="ORF">J2260</name>
</gene>
<comment type="function">
    <text>Probable glucose transporter.</text>
</comment>
<comment type="subcellular location">
    <subcellularLocation>
        <location evidence="3">Membrane</location>
        <topology evidence="3">Multi-pass membrane protein</topology>
    </subcellularLocation>
</comment>
<comment type="similarity">
    <text evidence="3">Belongs to the major facilitator superfamily. Sugar transporter (TC 2.A.1.1) family.</text>
</comment>
<protein>
    <recommendedName>
        <fullName>Hexose transporter HXT16</fullName>
    </recommendedName>
</protein>
<feature type="chain" id="PRO_0000050405" description="Hexose transporter HXT16">
    <location>
        <begin position="1"/>
        <end position="567"/>
    </location>
</feature>
<feature type="topological domain" description="Cytoplasmic" evidence="1">
    <location>
        <begin position="1"/>
        <end position="55"/>
    </location>
</feature>
<feature type="transmembrane region" description="Helical; Name=1" evidence="1">
    <location>
        <begin position="56"/>
        <end position="76"/>
    </location>
</feature>
<feature type="topological domain" description="Extracellular" evidence="1">
    <location>
        <begin position="77"/>
        <end position="112"/>
    </location>
</feature>
<feature type="transmembrane region" description="Helical; Name=2" evidence="1">
    <location>
        <begin position="113"/>
        <end position="133"/>
    </location>
</feature>
<feature type="topological domain" description="Cytoplasmic" evidence="1">
    <location>
        <begin position="134"/>
        <end position="139"/>
    </location>
</feature>
<feature type="transmembrane region" description="Helical; Name=3" evidence="1">
    <location>
        <begin position="140"/>
        <end position="160"/>
    </location>
</feature>
<feature type="topological domain" description="Extracellular" evidence="1">
    <location>
        <begin position="161"/>
        <end position="170"/>
    </location>
</feature>
<feature type="transmembrane region" description="Helical; Name=4" evidence="1">
    <location>
        <begin position="171"/>
        <end position="191"/>
    </location>
</feature>
<feature type="topological domain" description="Cytoplasmic" evidence="1">
    <location>
        <begin position="192"/>
        <end position="197"/>
    </location>
</feature>
<feature type="transmembrane region" description="Helical; Name=5" evidence="1">
    <location>
        <begin position="198"/>
        <end position="218"/>
    </location>
</feature>
<feature type="topological domain" description="Extracellular" evidence="1">
    <location>
        <begin position="219"/>
        <end position="232"/>
    </location>
</feature>
<feature type="transmembrane region" description="Helical; Name=6" evidence="1">
    <location>
        <begin position="233"/>
        <end position="253"/>
    </location>
</feature>
<feature type="topological domain" description="Cytoplasmic" evidence="1">
    <location>
        <begin position="254"/>
        <end position="336"/>
    </location>
</feature>
<feature type="transmembrane region" description="Helical; Name=7" evidence="1">
    <location>
        <begin position="337"/>
        <end position="353"/>
    </location>
</feature>
<feature type="topological domain" description="Extracellular" evidence="1">
    <location>
        <begin position="354"/>
        <end position="359"/>
    </location>
</feature>
<feature type="transmembrane region" description="Helical; Name=8" evidence="1">
    <location>
        <begin position="360"/>
        <end position="377"/>
    </location>
</feature>
<feature type="topological domain" description="Cytoplasmic" evidence="1">
    <location>
        <begin position="378"/>
        <end position="384"/>
    </location>
</feature>
<feature type="transmembrane region" description="Helical; Name=9" evidence="1">
    <location>
        <begin position="385"/>
        <end position="405"/>
    </location>
</feature>
<feature type="topological domain" description="Extracellular" evidence="1">
    <location>
        <begin position="406"/>
        <end position="427"/>
    </location>
</feature>
<feature type="transmembrane region" description="Helical; Name=10" evidence="1">
    <location>
        <begin position="428"/>
        <end position="448"/>
    </location>
</feature>
<feature type="topological domain" description="Cytoplasmic" evidence="1">
    <location>
        <begin position="449"/>
        <end position="465"/>
    </location>
</feature>
<feature type="transmembrane region" description="Helical; Name=11" evidence="1">
    <location>
        <begin position="466"/>
        <end position="486"/>
    </location>
</feature>
<feature type="topological domain" description="Extracellular" evidence="1">
    <location>
        <position position="487"/>
    </location>
</feature>
<feature type="transmembrane region" description="Helical; Name=12" evidence="1">
    <location>
        <begin position="488"/>
        <end position="508"/>
    </location>
</feature>
<feature type="topological domain" description="Cytoplasmic" evidence="1">
    <location>
        <begin position="509"/>
        <end position="567"/>
    </location>
</feature>
<feature type="region of interest" description="Disordered" evidence="2">
    <location>
        <begin position="1"/>
        <end position="32"/>
    </location>
</feature>
<feature type="region of interest" description="Disordered" evidence="2">
    <location>
        <begin position="533"/>
        <end position="555"/>
    </location>
</feature>
<feature type="compositionally biased region" description="Polar residues" evidence="2">
    <location>
        <begin position="1"/>
        <end position="19"/>
    </location>
</feature>
<feature type="compositionally biased region" description="Basic and acidic residues" evidence="2">
    <location>
        <begin position="545"/>
        <end position="555"/>
    </location>
</feature>
<proteinExistence type="inferred from homology"/>
<organism>
    <name type="scientific">Saccharomyces cerevisiae (strain ATCC 204508 / S288c)</name>
    <name type="common">Baker's yeast</name>
    <dbReference type="NCBI Taxonomy" id="559292"/>
    <lineage>
        <taxon>Eukaryota</taxon>
        <taxon>Fungi</taxon>
        <taxon>Dikarya</taxon>
        <taxon>Ascomycota</taxon>
        <taxon>Saccharomycotina</taxon>
        <taxon>Saccharomycetes</taxon>
        <taxon>Saccharomycetales</taxon>
        <taxon>Saccharomycetaceae</taxon>
        <taxon>Saccharomyces</taxon>
    </lineage>
</organism>
<accession>P47185</accession>
<accession>D6VWX6</accession>